<keyword id="KW-1185">Reference proteome</keyword>
<keyword id="KW-0687">Ribonucleoprotein</keyword>
<keyword id="KW-0689">Ribosomal protein</keyword>
<keyword id="KW-0694">RNA-binding</keyword>
<keyword id="KW-0699">rRNA-binding</keyword>
<feature type="chain" id="PRO_0000132436" description="Small ribosomal subunit protein uS4">
    <location>
        <begin position="1"/>
        <end position="202"/>
    </location>
</feature>
<feature type="domain" description="S4 RNA-binding" evidence="1">
    <location>
        <begin position="90"/>
        <end position="152"/>
    </location>
</feature>
<feature type="region of interest" description="Disordered" evidence="2">
    <location>
        <begin position="1"/>
        <end position="43"/>
    </location>
</feature>
<feature type="compositionally biased region" description="Basic residues" evidence="2">
    <location>
        <begin position="1"/>
        <end position="13"/>
    </location>
</feature>
<sequence>MSRYRGPRLRITRRLGDLPGLTRKAAKRSHPPGQHGQARRKRSEYAIRLEEKQKLRFNYGISERQLVRYVKKARAQDGSTGTNLLKLLENRLDNVCFRLGFGPTVPGARQLVNHGHVTVNGRVLDIASYQCKAGDVVAIRERKGSKKLAEANLEFPGLANVPPHIELDKAKMSAKIISKCEREWVALEINELLVVEYYSRKV</sequence>
<gene>
    <name evidence="1" type="primary">rpsD</name>
    <name evidence="1" type="synonym">rps4</name>
    <name type="ordered locus">PMT_0227</name>
</gene>
<name>RS4_PROMM</name>
<evidence type="ECO:0000255" key="1">
    <source>
        <dbReference type="HAMAP-Rule" id="MF_01306"/>
    </source>
</evidence>
<evidence type="ECO:0000256" key="2">
    <source>
        <dbReference type="SAM" id="MobiDB-lite"/>
    </source>
</evidence>
<evidence type="ECO:0000305" key="3"/>
<organism>
    <name type="scientific">Prochlorococcus marinus (strain MIT 9313)</name>
    <dbReference type="NCBI Taxonomy" id="74547"/>
    <lineage>
        <taxon>Bacteria</taxon>
        <taxon>Bacillati</taxon>
        <taxon>Cyanobacteriota</taxon>
        <taxon>Cyanophyceae</taxon>
        <taxon>Synechococcales</taxon>
        <taxon>Prochlorococcaceae</taxon>
        <taxon>Prochlorococcus</taxon>
    </lineage>
</organism>
<reference key="1">
    <citation type="journal article" date="2003" name="Nature">
        <title>Genome divergence in two Prochlorococcus ecotypes reflects oceanic niche differentiation.</title>
        <authorList>
            <person name="Rocap G."/>
            <person name="Larimer F.W."/>
            <person name="Lamerdin J.E."/>
            <person name="Malfatti S."/>
            <person name="Chain P."/>
            <person name="Ahlgren N.A."/>
            <person name="Arellano A."/>
            <person name="Coleman M."/>
            <person name="Hauser L."/>
            <person name="Hess W.R."/>
            <person name="Johnson Z.I."/>
            <person name="Land M.L."/>
            <person name="Lindell D."/>
            <person name="Post A.F."/>
            <person name="Regala W."/>
            <person name="Shah M."/>
            <person name="Shaw S.L."/>
            <person name="Steglich C."/>
            <person name="Sullivan M.B."/>
            <person name="Ting C.S."/>
            <person name="Tolonen A."/>
            <person name="Webb E.A."/>
            <person name="Zinser E.R."/>
            <person name="Chisholm S.W."/>
        </authorList>
    </citation>
    <scope>NUCLEOTIDE SEQUENCE [LARGE SCALE GENOMIC DNA]</scope>
    <source>
        <strain>MIT 9313</strain>
    </source>
</reference>
<accession>Q7V8U9</accession>
<comment type="function">
    <text evidence="1">One of the primary rRNA binding proteins, it binds directly to 16S rRNA where it nucleates assembly of the body of the 30S subunit.</text>
</comment>
<comment type="function">
    <text evidence="1">With S5 and S12 plays an important role in translational accuracy.</text>
</comment>
<comment type="subunit">
    <text evidence="1">Part of the 30S ribosomal subunit. Contacts protein S5. The interaction surface between S4 and S5 is involved in control of translational fidelity.</text>
</comment>
<comment type="similarity">
    <text evidence="1">Belongs to the universal ribosomal protein uS4 family.</text>
</comment>
<proteinExistence type="inferred from homology"/>
<dbReference type="EMBL" id="BX548175">
    <property type="protein sequence ID" value="CAE20402.1"/>
    <property type="molecule type" value="Genomic_DNA"/>
</dbReference>
<dbReference type="RefSeq" id="WP_011129606.1">
    <property type="nucleotide sequence ID" value="NC_005071.1"/>
</dbReference>
<dbReference type="SMR" id="Q7V8U9"/>
<dbReference type="KEGG" id="pmt:PMT_0227"/>
<dbReference type="eggNOG" id="COG0522">
    <property type="taxonomic scope" value="Bacteria"/>
</dbReference>
<dbReference type="HOGENOM" id="CLU_092403_0_5_3"/>
<dbReference type="OrthoDB" id="9803672at2"/>
<dbReference type="Proteomes" id="UP000001423">
    <property type="component" value="Chromosome"/>
</dbReference>
<dbReference type="GO" id="GO:0015935">
    <property type="term" value="C:small ribosomal subunit"/>
    <property type="evidence" value="ECO:0007669"/>
    <property type="project" value="InterPro"/>
</dbReference>
<dbReference type="GO" id="GO:0019843">
    <property type="term" value="F:rRNA binding"/>
    <property type="evidence" value="ECO:0007669"/>
    <property type="project" value="UniProtKB-UniRule"/>
</dbReference>
<dbReference type="GO" id="GO:0003735">
    <property type="term" value="F:structural constituent of ribosome"/>
    <property type="evidence" value="ECO:0007669"/>
    <property type="project" value="InterPro"/>
</dbReference>
<dbReference type="GO" id="GO:0042274">
    <property type="term" value="P:ribosomal small subunit biogenesis"/>
    <property type="evidence" value="ECO:0007669"/>
    <property type="project" value="TreeGrafter"/>
</dbReference>
<dbReference type="GO" id="GO:0006412">
    <property type="term" value="P:translation"/>
    <property type="evidence" value="ECO:0007669"/>
    <property type="project" value="UniProtKB-UniRule"/>
</dbReference>
<dbReference type="CDD" id="cd00165">
    <property type="entry name" value="S4"/>
    <property type="match status" value="1"/>
</dbReference>
<dbReference type="FunFam" id="3.10.290.10:FF:000001">
    <property type="entry name" value="30S ribosomal protein S4"/>
    <property type="match status" value="1"/>
</dbReference>
<dbReference type="FunFam" id="1.10.1050.10:FF:000002">
    <property type="entry name" value="30S ribosomal protein S4, chloroplastic"/>
    <property type="match status" value="1"/>
</dbReference>
<dbReference type="Gene3D" id="1.10.1050.10">
    <property type="entry name" value="Ribosomal Protein S4 Delta 41, Chain A, domain 1"/>
    <property type="match status" value="1"/>
</dbReference>
<dbReference type="Gene3D" id="3.10.290.10">
    <property type="entry name" value="RNA-binding S4 domain"/>
    <property type="match status" value="1"/>
</dbReference>
<dbReference type="HAMAP" id="MF_01306_B">
    <property type="entry name" value="Ribosomal_uS4_B"/>
    <property type="match status" value="1"/>
</dbReference>
<dbReference type="InterPro" id="IPR022801">
    <property type="entry name" value="Ribosomal_uS4"/>
</dbReference>
<dbReference type="InterPro" id="IPR005709">
    <property type="entry name" value="Ribosomal_uS4_bac-type"/>
</dbReference>
<dbReference type="InterPro" id="IPR018079">
    <property type="entry name" value="Ribosomal_uS4_CS"/>
</dbReference>
<dbReference type="InterPro" id="IPR001912">
    <property type="entry name" value="Ribosomal_uS4_N"/>
</dbReference>
<dbReference type="InterPro" id="IPR002942">
    <property type="entry name" value="S4_RNA-bd"/>
</dbReference>
<dbReference type="InterPro" id="IPR036986">
    <property type="entry name" value="S4_RNA-bd_sf"/>
</dbReference>
<dbReference type="NCBIfam" id="NF003717">
    <property type="entry name" value="PRK05327.1"/>
    <property type="match status" value="1"/>
</dbReference>
<dbReference type="NCBIfam" id="TIGR01017">
    <property type="entry name" value="rpsD_bact"/>
    <property type="match status" value="1"/>
</dbReference>
<dbReference type="PANTHER" id="PTHR11831">
    <property type="entry name" value="30S 40S RIBOSOMAL PROTEIN"/>
    <property type="match status" value="1"/>
</dbReference>
<dbReference type="PANTHER" id="PTHR11831:SF4">
    <property type="entry name" value="SMALL RIBOSOMAL SUBUNIT PROTEIN US4M"/>
    <property type="match status" value="1"/>
</dbReference>
<dbReference type="Pfam" id="PF00163">
    <property type="entry name" value="Ribosomal_S4"/>
    <property type="match status" value="1"/>
</dbReference>
<dbReference type="Pfam" id="PF01479">
    <property type="entry name" value="S4"/>
    <property type="match status" value="1"/>
</dbReference>
<dbReference type="SMART" id="SM01390">
    <property type="entry name" value="Ribosomal_S4"/>
    <property type="match status" value="1"/>
</dbReference>
<dbReference type="SMART" id="SM00363">
    <property type="entry name" value="S4"/>
    <property type="match status" value="1"/>
</dbReference>
<dbReference type="SUPFAM" id="SSF55174">
    <property type="entry name" value="Alpha-L RNA-binding motif"/>
    <property type="match status" value="1"/>
</dbReference>
<dbReference type="PROSITE" id="PS00632">
    <property type="entry name" value="RIBOSOMAL_S4"/>
    <property type="match status" value="1"/>
</dbReference>
<dbReference type="PROSITE" id="PS50889">
    <property type="entry name" value="S4"/>
    <property type="match status" value="1"/>
</dbReference>
<protein>
    <recommendedName>
        <fullName evidence="1">Small ribosomal subunit protein uS4</fullName>
    </recommendedName>
    <alternativeName>
        <fullName evidence="3">30S ribosomal protein S4</fullName>
    </alternativeName>
</protein>